<reference key="1">
    <citation type="journal article" date="2002" name="Nature">
        <title>The genome sequence of Schizosaccharomyces pombe.</title>
        <authorList>
            <person name="Wood V."/>
            <person name="Gwilliam R."/>
            <person name="Rajandream M.A."/>
            <person name="Lyne M.H."/>
            <person name="Lyne R."/>
            <person name="Stewart A."/>
            <person name="Sgouros J.G."/>
            <person name="Peat N."/>
            <person name="Hayles J."/>
            <person name="Baker S.G."/>
            <person name="Basham D."/>
            <person name="Bowman S."/>
            <person name="Brooks K."/>
            <person name="Brown D."/>
            <person name="Brown S."/>
            <person name="Chillingworth T."/>
            <person name="Churcher C.M."/>
            <person name="Collins M."/>
            <person name="Connor R."/>
            <person name="Cronin A."/>
            <person name="Davis P."/>
            <person name="Feltwell T."/>
            <person name="Fraser A."/>
            <person name="Gentles S."/>
            <person name="Goble A."/>
            <person name="Hamlin N."/>
            <person name="Harris D.E."/>
            <person name="Hidalgo J."/>
            <person name="Hodgson G."/>
            <person name="Holroyd S."/>
            <person name="Hornsby T."/>
            <person name="Howarth S."/>
            <person name="Huckle E.J."/>
            <person name="Hunt S."/>
            <person name="Jagels K."/>
            <person name="James K.D."/>
            <person name="Jones L."/>
            <person name="Jones M."/>
            <person name="Leather S."/>
            <person name="McDonald S."/>
            <person name="McLean J."/>
            <person name="Mooney P."/>
            <person name="Moule S."/>
            <person name="Mungall K.L."/>
            <person name="Murphy L.D."/>
            <person name="Niblett D."/>
            <person name="Odell C."/>
            <person name="Oliver K."/>
            <person name="O'Neil S."/>
            <person name="Pearson D."/>
            <person name="Quail M.A."/>
            <person name="Rabbinowitsch E."/>
            <person name="Rutherford K.M."/>
            <person name="Rutter S."/>
            <person name="Saunders D."/>
            <person name="Seeger K."/>
            <person name="Sharp S."/>
            <person name="Skelton J."/>
            <person name="Simmonds M.N."/>
            <person name="Squares R."/>
            <person name="Squares S."/>
            <person name="Stevens K."/>
            <person name="Taylor K."/>
            <person name="Taylor R.G."/>
            <person name="Tivey A."/>
            <person name="Walsh S.V."/>
            <person name="Warren T."/>
            <person name="Whitehead S."/>
            <person name="Woodward J.R."/>
            <person name="Volckaert G."/>
            <person name="Aert R."/>
            <person name="Robben J."/>
            <person name="Grymonprez B."/>
            <person name="Weltjens I."/>
            <person name="Vanstreels E."/>
            <person name="Rieger M."/>
            <person name="Schaefer M."/>
            <person name="Mueller-Auer S."/>
            <person name="Gabel C."/>
            <person name="Fuchs M."/>
            <person name="Duesterhoeft A."/>
            <person name="Fritzc C."/>
            <person name="Holzer E."/>
            <person name="Moestl D."/>
            <person name="Hilbert H."/>
            <person name="Borzym K."/>
            <person name="Langer I."/>
            <person name="Beck A."/>
            <person name="Lehrach H."/>
            <person name="Reinhardt R."/>
            <person name="Pohl T.M."/>
            <person name="Eger P."/>
            <person name="Zimmermann W."/>
            <person name="Wedler H."/>
            <person name="Wambutt R."/>
            <person name="Purnelle B."/>
            <person name="Goffeau A."/>
            <person name="Cadieu E."/>
            <person name="Dreano S."/>
            <person name="Gloux S."/>
            <person name="Lelaure V."/>
            <person name="Mottier S."/>
            <person name="Galibert F."/>
            <person name="Aves S.J."/>
            <person name="Xiang Z."/>
            <person name="Hunt C."/>
            <person name="Moore K."/>
            <person name="Hurst S.M."/>
            <person name="Lucas M."/>
            <person name="Rochet M."/>
            <person name="Gaillardin C."/>
            <person name="Tallada V.A."/>
            <person name="Garzon A."/>
            <person name="Thode G."/>
            <person name="Daga R.R."/>
            <person name="Cruzado L."/>
            <person name="Jimenez J."/>
            <person name="Sanchez M."/>
            <person name="del Rey F."/>
            <person name="Benito J."/>
            <person name="Dominguez A."/>
            <person name="Revuelta J.L."/>
            <person name="Moreno S."/>
            <person name="Armstrong J."/>
            <person name="Forsburg S.L."/>
            <person name="Cerutti L."/>
            <person name="Lowe T."/>
            <person name="McCombie W.R."/>
            <person name="Paulsen I."/>
            <person name="Potashkin J."/>
            <person name="Shpakovski G.V."/>
            <person name="Ussery D."/>
            <person name="Barrell B.G."/>
            <person name="Nurse P."/>
        </authorList>
    </citation>
    <scope>NUCLEOTIDE SEQUENCE [LARGE SCALE GENOMIC DNA]</scope>
    <source>
        <strain>972 / ATCC 24843</strain>
    </source>
</reference>
<reference key="2">
    <citation type="journal article" date="2000" name="Yeast">
        <title>A 38 kb segment containing the cdc2 gene from the left arm of fission yeast chromosome II: sequence analysis and characterization of the genomic DNA and cDNAs encoded on the segment.</title>
        <authorList>
            <person name="Machida M."/>
            <person name="Yamazaki S."/>
            <person name="Kunihiro S."/>
            <person name="Tanaka T."/>
            <person name="Kushida N."/>
            <person name="Jinno K."/>
            <person name="Haikawa Y."/>
            <person name="Yamazaki J."/>
            <person name="Yamamoto S."/>
            <person name="Sekine M."/>
            <person name="Oguchi A."/>
            <person name="Nagai Y."/>
            <person name="Sakai M."/>
            <person name="Aoki K."/>
            <person name="Ogura K."/>
            <person name="Kudoh Y."/>
            <person name="Kikuchi H."/>
            <person name="Zhang M.Q."/>
            <person name="Yanagida M."/>
        </authorList>
    </citation>
    <scope>NUCLEOTIDE SEQUENCE [LARGE SCALE GENOMIC DNA] OF 115-840</scope>
    <source>
        <strain>972 / ATCC 24843</strain>
    </source>
</reference>
<reference key="3">
    <citation type="journal article" date="2003" name="J. Cell Biol.">
        <title>Sfi1p has conserved centrin-binding sites and an essential function in budding yeast spindle pole body duplication.</title>
        <authorList>
            <person name="Kilmartin J.V."/>
        </authorList>
    </citation>
    <scope>SUBCELLULAR LOCATION</scope>
</reference>
<reference key="4">
    <citation type="journal article" date="2006" name="Nat. Biotechnol.">
        <title>ORFeome cloning and global analysis of protein localization in the fission yeast Schizosaccharomyces pombe.</title>
        <authorList>
            <person name="Matsuyama A."/>
            <person name="Arai R."/>
            <person name="Yashiroda Y."/>
            <person name="Shirai A."/>
            <person name="Kamata A."/>
            <person name="Sekido S."/>
            <person name="Kobayashi Y."/>
            <person name="Hashimoto A."/>
            <person name="Hamamoto M."/>
            <person name="Hiraoka Y."/>
            <person name="Horinouchi S."/>
            <person name="Yoshida M."/>
        </authorList>
    </citation>
    <scope>SUBCELLULAR LOCATION [LARGE SCALE ANALYSIS]</scope>
</reference>
<sequence length="840" mass="102033">MSKNGAPKYVDGGRKIMDEDLRRDLEILRLILLRLSHAADDTSPLDVFNAYESVLRENGLNPARHRSYIRILYRLISSKKLSWNDEWRNLMRRIGFSQVSSDLNTPLFPLNNTDMENDPFIVNGDDYRSRSNQQKSSQFASEVAQTIKSQTAMFRRADQYRSQKDKILLANSLDFMLEKYRYYKKIDAVYLRKADAVYRAFIMLKYFPRWVQKLRNIQSRIYSAGEAYRLILIGQMVNRWRQKTRERLHQKLRFQKNAFLLDVLLKWSALTVNWNRKHEYMLKRRVFTNWMSKRRRNESLIQKANVFFQHSVLAHSFKTWKANLSIKNAATLYEKKVVFMSFNRWHANYESHVLDLQKAELFSQKAYYSIALHKWKLRIEELSDLMNKADDLYEVNLLQRMLVLWRRKATTYEKIDFWMDGHDVDIVKSAFFKWKNKFIKVDRNFELADTILQNTFLTKWRLAVRVKVVQEKRNKDRLIVTFRFWYYLMKAKSFQHKRDHRLLTIAWEAWKDNYQRRIKLQKEAQELQLTRIQKIAKQYLIKWRISLLDIKELSIRAEKLHTTNEIIGVWNQWVVSYNRKVGMQQNADLFFKRKTLRVVFEHWRYLRETNMLLRLENKVVDFREVQSEKLVLRCWNAWVARLLSVSQMLDTAELSTQKVVVRAYEAWSFRYNHQKEIMSQADQFYNERLMRSAMVFWRYQLRAIKFYFNISDWKRREFNRQTLRNAFDAWHLLMFRVTSLVMQADRFHEQKKNKLLGKYFRKWLQRMQLNQEESSLLEAEATIEGNRTSRYMHTFDTTLPMQNDEFTDESVNFENRWKQELKTPISRFSKFLRPIPPNTR</sequence>
<accession>O13652</accession>
<accession>Q7LWD9</accession>
<keyword id="KW-0131">Cell cycle</keyword>
<keyword id="KW-0132">Cell division</keyword>
<keyword id="KW-0963">Cytoplasm</keyword>
<keyword id="KW-0206">Cytoskeleton</keyword>
<keyword id="KW-0498">Mitosis</keyword>
<keyword id="KW-0539">Nucleus</keyword>
<keyword id="KW-1185">Reference proteome</keyword>
<dbReference type="EMBL" id="CU329671">
    <property type="protein sequence ID" value="CAA17820.2"/>
    <property type="molecule type" value="Genomic_DNA"/>
</dbReference>
<dbReference type="EMBL" id="AB004538">
    <property type="protein sequence ID" value="BAA21440.1"/>
    <property type="molecule type" value="Genomic_DNA"/>
</dbReference>
<dbReference type="PIR" id="T40750">
    <property type="entry name" value="T40750"/>
</dbReference>
<dbReference type="RefSeq" id="NP_595568.1">
    <property type="nucleotide sequence ID" value="NM_001021463.2"/>
</dbReference>
<dbReference type="BioGRID" id="277756">
    <property type="interactions" value="4"/>
</dbReference>
<dbReference type="FunCoup" id="O13652">
    <property type="interactions" value="2"/>
</dbReference>
<dbReference type="IntAct" id="O13652">
    <property type="interactions" value="3"/>
</dbReference>
<dbReference type="MINT" id="O13652"/>
<dbReference type="STRING" id="284812.O13652"/>
<dbReference type="iPTMnet" id="O13652"/>
<dbReference type="PaxDb" id="4896-SPBC8D2.05c.1"/>
<dbReference type="EnsemblFungi" id="SPBC8D2.05c.1">
    <property type="protein sequence ID" value="SPBC8D2.05c.1:pep"/>
    <property type="gene ID" value="SPBC8D2.05c"/>
</dbReference>
<dbReference type="GeneID" id="2541242"/>
<dbReference type="KEGG" id="spo:2541242"/>
<dbReference type="PomBase" id="SPBC8D2.05c">
    <property type="gene designation" value="sfi1"/>
</dbReference>
<dbReference type="VEuPathDB" id="FungiDB:SPBC8D2.05c"/>
<dbReference type="eggNOG" id="KOG4775">
    <property type="taxonomic scope" value="Eukaryota"/>
</dbReference>
<dbReference type="HOGENOM" id="CLU_337752_0_0_1"/>
<dbReference type="InParanoid" id="O13652"/>
<dbReference type="OMA" id="WDRATVR"/>
<dbReference type="PhylomeDB" id="O13652"/>
<dbReference type="PRO" id="PR:O13652"/>
<dbReference type="Proteomes" id="UP000002485">
    <property type="component" value="Chromosome II"/>
</dbReference>
<dbReference type="GO" id="GO:0005829">
    <property type="term" value="C:cytosol"/>
    <property type="evidence" value="ECO:0007005"/>
    <property type="project" value="PomBase"/>
</dbReference>
<dbReference type="GO" id="GO:0061496">
    <property type="term" value="C:half bridge of mitotic spindle pole body"/>
    <property type="evidence" value="ECO:0000314"/>
    <property type="project" value="PomBase"/>
</dbReference>
<dbReference type="GO" id="GO:0035974">
    <property type="term" value="C:meiotic spindle pole body"/>
    <property type="evidence" value="ECO:0000314"/>
    <property type="project" value="PomBase"/>
</dbReference>
<dbReference type="GO" id="GO:0044732">
    <property type="term" value="C:mitotic spindle pole body"/>
    <property type="evidence" value="ECO:0000314"/>
    <property type="project" value="PomBase"/>
</dbReference>
<dbReference type="GO" id="GO:0005634">
    <property type="term" value="C:nucleus"/>
    <property type="evidence" value="ECO:0007005"/>
    <property type="project" value="PomBase"/>
</dbReference>
<dbReference type="GO" id="GO:0000922">
    <property type="term" value="C:spindle pole"/>
    <property type="evidence" value="ECO:0007669"/>
    <property type="project" value="UniProtKB-SubCell"/>
</dbReference>
<dbReference type="GO" id="GO:0051301">
    <property type="term" value="P:cell division"/>
    <property type="evidence" value="ECO:0007669"/>
    <property type="project" value="UniProtKB-KW"/>
</dbReference>
<dbReference type="GO" id="GO:1903087">
    <property type="term" value="P:mitotic spindle pole body duplication"/>
    <property type="evidence" value="ECO:0000266"/>
    <property type="project" value="PomBase"/>
</dbReference>
<dbReference type="InterPro" id="IPR013665">
    <property type="entry name" value="Sfi1_dom"/>
</dbReference>
<dbReference type="Pfam" id="PF08457">
    <property type="entry name" value="Sfi1"/>
    <property type="match status" value="1"/>
</dbReference>
<gene>
    <name type="primary">sfi1</name>
    <name type="ORF">pi059</name>
    <name type="ORF">SPBC8D2.05c</name>
</gene>
<proteinExistence type="inferred from homology"/>
<protein>
    <recommendedName>
        <fullName>Protein sfi1</fullName>
    </recommendedName>
    <alternativeName>
        <fullName>Suppressor of fermentation induced loss of stress resistance protein 1</fullName>
    </alternativeName>
</protein>
<comment type="function">
    <text evidence="1">Component of the spindle pole body (SPB) half-bridge involved in the initial steps of SPB duplication.</text>
</comment>
<comment type="subcellular location">
    <subcellularLocation>
        <location evidence="4">Cytoplasm</location>
    </subcellularLocation>
    <subcellularLocation>
        <location evidence="3 4">Nucleus</location>
    </subcellularLocation>
    <subcellularLocation>
        <location evidence="3 4">Cytoplasm</location>
        <location evidence="3 4">Cytoskeleton</location>
        <location evidence="3 4">Spindle pole</location>
    </subcellularLocation>
    <text evidence="2">Spindle pole, half bridge.</text>
</comment>
<comment type="similarity">
    <text evidence="5">Belongs to the SFI1 family.</text>
</comment>
<evidence type="ECO:0000250" key="1"/>
<evidence type="ECO:0000250" key="2">
    <source>
        <dbReference type="UniProtKB" id="Q12369"/>
    </source>
</evidence>
<evidence type="ECO:0000269" key="3">
    <source>
    </source>
</evidence>
<evidence type="ECO:0000269" key="4">
    <source>
    </source>
</evidence>
<evidence type="ECO:0000305" key="5"/>
<name>SFI1_SCHPO</name>
<feature type="chain" id="PRO_0000290647" description="Protein sfi1">
    <location>
        <begin position="1"/>
        <end position="840"/>
    </location>
</feature>
<organism>
    <name type="scientific">Schizosaccharomyces pombe (strain 972 / ATCC 24843)</name>
    <name type="common">Fission yeast</name>
    <dbReference type="NCBI Taxonomy" id="284812"/>
    <lineage>
        <taxon>Eukaryota</taxon>
        <taxon>Fungi</taxon>
        <taxon>Dikarya</taxon>
        <taxon>Ascomycota</taxon>
        <taxon>Taphrinomycotina</taxon>
        <taxon>Schizosaccharomycetes</taxon>
        <taxon>Schizosaccharomycetales</taxon>
        <taxon>Schizosaccharomycetaceae</taxon>
        <taxon>Schizosaccharomyces</taxon>
    </lineage>
</organism>